<reference key="1">
    <citation type="journal article" date="1988" name="Nucleic Acids Res.">
        <title>The nucleotide sequence of the tetracycline resistance determinant tetM from Ureaplasma urealyticum.</title>
        <authorList>
            <person name="Sanchez-Pescador R."/>
            <person name="Brown J.T."/>
            <person name="Roberts M."/>
            <person name="Urdea M.S."/>
        </authorList>
    </citation>
    <scope>NUCLEOTIDE SEQUENCE [GENOMIC DNA]</scope>
</reference>
<keyword id="KW-0046">Antibiotic resistance</keyword>
<keyword id="KW-0342">GTP-binding</keyword>
<keyword id="KW-0547">Nucleotide-binding</keyword>
<keyword id="KW-0648">Protein biosynthesis</keyword>
<comment type="function">
    <text>Abolishes the inhibitory effect of tetracyclin on protein synthesis by a non-covalent modification of the ribosomes.</text>
</comment>
<comment type="similarity">
    <text evidence="2">Belongs to the TRAFAC class translation factor GTPase superfamily. Classic translation factor GTPase family. TetM/TetO subfamily.</text>
</comment>
<gene>
    <name type="primary">tetM</name>
</gene>
<accession>P09757</accession>
<organism>
    <name type="scientific">Ureaplasma urealyticum</name>
    <name type="common">Ureaplasma urealyticum biotype 2</name>
    <dbReference type="NCBI Taxonomy" id="2130"/>
    <lineage>
        <taxon>Bacteria</taxon>
        <taxon>Bacillati</taxon>
        <taxon>Mycoplasmatota</taxon>
        <taxon>Mycoplasmoidales</taxon>
        <taxon>Mycoplasmoidaceae</taxon>
        <taxon>Ureaplasma</taxon>
    </lineage>
</organism>
<evidence type="ECO:0000250" key="1"/>
<evidence type="ECO:0000255" key="2">
    <source>
        <dbReference type="PROSITE-ProRule" id="PRU01059"/>
    </source>
</evidence>
<feature type="chain" id="PRO_0000091503" description="Tetracycline resistance protein TetM">
    <location>
        <begin position="1"/>
        <end position="639"/>
    </location>
</feature>
<feature type="domain" description="tr-type G" evidence="2">
    <location>
        <begin position="1"/>
        <end position="242"/>
    </location>
</feature>
<feature type="binding site" evidence="1">
    <location>
        <begin position="10"/>
        <end position="17"/>
    </location>
    <ligand>
        <name>GTP</name>
        <dbReference type="ChEBI" id="CHEBI:37565"/>
    </ligand>
</feature>
<feature type="binding site" evidence="1">
    <location>
        <begin position="74"/>
        <end position="78"/>
    </location>
    <ligand>
        <name>GTP</name>
        <dbReference type="ChEBI" id="CHEBI:37565"/>
    </ligand>
</feature>
<feature type="binding site" evidence="1">
    <location>
        <begin position="128"/>
        <end position="131"/>
    </location>
    <ligand>
        <name>GTP</name>
        <dbReference type="ChEBI" id="CHEBI:37565"/>
    </ligand>
</feature>
<name>TETM_UREUR</name>
<sequence length="639" mass="72599">MKIINIGVLAHVDAGKTTLTESLLYNSGAITELGSVDKGTTRTDNTLLERQRGITIQTGITSFQWENTKVNIIDTPGHMDFLAEVYRSLSVLDGAILLISAKDGVQAQTRILFHALRKMGIPTIFFINKIDQNGIDLSTVYQDIKEKLSAEIVIKQKVELYPNMCVTNFTESEQWDTVIEGNDDLLEKYMSGKSLEALELEQEESIRFHNCSLFPVYHGSAKNNIGIDNLIEVITNKFYSSTHRGPSELCGNVFKIEYTKKRQRLAYIRLYSGVLHLRDSVRVSEKEKIKVTEMYTSINGELCKIDRAYSGEIVILQNEFLKLNSVLGDTKLLPQRKRIENPHPLLQITVEPSKPEQREMLLDALLEISDSDPLLRYYVDSTTHEIILSFLGKVQMEVISALLQEKYHVEIELKEPTVIYMERPLKNAEYTIHIEVPPNPFWASIGLSVSPLPLGSGMQYESSVSLGYLNQSFQNAVMEGIRYGCEQGLYGWNVTECKICFKYGLYYSPVSTPADFRMLAPIVLEQVLKKAGTELLEPYLSFKIYAPQEYLSRAYNDAPKYCANIVDTQLKNNEVILSGEIPARCIQEYRSDLTFFTNGRSVCLTELKGYHVTTGEPVCQPRRPNSRIDKVRYMFNKIT</sequence>
<proteinExistence type="inferred from homology"/>
<dbReference type="EMBL" id="U08812">
    <property type="protein sequence ID" value="AAA73978.1"/>
    <property type="molecule type" value="Unassigned_DNA"/>
</dbReference>
<dbReference type="PIR" id="S03268">
    <property type="entry name" value="S03268"/>
</dbReference>
<dbReference type="RefSeq" id="WP_063856110.1">
    <property type="nucleotide sequence ID" value="NG_048216.1"/>
</dbReference>
<dbReference type="SMR" id="P09757"/>
<dbReference type="GO" id="GO:0005525">
    <property type="term" value="F:GTP binding"/>
    <property type="evidence" value="ECO:0007669"/>
    <property type="project" value="UniProtKB-KW"/>
</dbReference>
<dbReference type="GO" id="GO:0003924">
    <property type="term" value="F:GTPase activity"/>
    <property type="evidence" value="ECO:0007669"/>
    <property type="project" value="InterPro"/>
</dbReference>
<dbReference type="GO" id="GO:0046677">
    <property type="term" value="P:response to antibiotic"/>
    <property type="evidence" value="ECO:0007669"/>
    <property type="project" value="UniProtKB-KW"/>
</dbReference>
<dbReference type="GO" id="GO:0032790">
    <property type="term" value="P:ribosome disassembly"/>
    <property type="evidence" value="ECO:0007669"/>
    <property type="project" value="TreeGrafter"/>
</dbReference>
<dbReference type="GO" id="GO:0006412">
    <property type="term" value="P:translation"/>
    <property type="evidence" value="ECO:0007669"/>
    <property type="project" value="UniProtKB-KW"/>
</dbReference>
<dbReference type="CDD" id="cd03711">
    <property type="entry name" value="Tet_C"/>
    <property type="match status" value="1"/>
</dbReference>
<dbReference type="CDD" id="cd03690">
    <property type="entry name" value="Tet_II"/>
    <property type="match status" value="1"/>
</dbReference>
<dbReference type="CDD" id="cd16258">
    <property type="entry name" value="Tet_III"/>
    <property type="match status" value="1"/>
</dbReference>
<dbReference type="CDD" id="cd01684">
    <property type="entry name" value="Tet_like_IV"/>
    <property type="match status" value="1"/>
</dbReference>
<dbReference type="CDD" id="cd04168">
    <property type="entry name" value="TetM_like"/>
    <property type="match status" value="1"/>
</dbReference>
<dbReference type="Gene3D" id="3.30.230.10">
    <property type="match status" value="1"/>
</dbReference>
<dbReference type="Gene3D" id="3.30.70.240">
    <property type="match status" value="1"/>
</dbReference>
<dbReference type="Gene3D" id="3.30.70.870">
    <property type="entry name" value="Elongation Factor G (Translational Gtpase), domain 3"/>
    <property type="match status" value="1"/>
</dbReference>
<dbReference type="Gene3D" id="3.40.50.300">
    <property type="entry name" value="P-loop containing nucleotide triphosphate hydrolases"/>
    <property type="match status" value="1"/>
</dbReference>
<dbReference type="Gene3D" id="2.40.30.10">
    <property type="entry name" value="Translation factors"/>
    <property type="match status" value="1"/>
</dbReference>
<dbReference type="InterPro" id="IPR053905">
    <property type="entry name" value="EF-G-like_DII"/>
</dbReference>
<dbReference type="InterPro" id="IPR041095">
    <property type="entry name" value="EFG_II"/>
</dbReference>
<dbReference type="InterPro" id="IPR035647">
    <property type="entry name" value="EFG_III/V"/>
</dbReference>
<dbReference type="InterPro" id="IPR000640">
    <property type="entry name" value="EFG_V-like"/>
</dbReference>
<dbReference type="InterPro" id="IPR031157">
    <property type="entry name" value="G_TR_CS"/>
</dbReference>
<dbReference type="InterPro" id="IPR027417">
    <property type="entry name" value="P-loop_NTPase"/>
</dbReference>
<dbReference type="InterPro" id="IPR020568">
    <property type="entry name" value="Ribosomal_Su5_D2-typ_SF"/>
</dbReference>
<dbReference type="InterPro" id="IPR014721">
    <property type="entry name" value="Ribsml_uS5_D2-typ_fold_subgr"/>
</dbReference>
<dbReference type="InterPro" id="IPR005225">
    <property type="entry name" value="Small_GTP-bd"/>
</dbReference>
<dbReference type="InterPro" id="IPR000795">
    <property type="entry name" value="T_Tr_GTP-bd_dom"/>
</dbReference>
<dbReference type="InterPro" id="IPR035650">
    <property type="entry name" value="Tet_C"/>
</dbReference>
<dbReference type="InterPro" id="IPR009000">
    <property type="entry name" value="Transl_B-barrel_sf"/>
</dbReference>
<dbReference type="InterPro" id="IPR005517">
    <property type="entry name" value="Transl_elong_EFG/EF2_IV"/>
</dbReference>
<dbReference type="NCBIfam" id="TIGR00231">
    <property type="entry name" value="small_GTP"/>
    <property type="match status" value="1"/>
</dbReference>
<dbReference type="NCBIfam" id="NF012153">
    <property type="entry name" value="tet_protect"/>
    <property type="match status" value="1"/>
</dbReference>
<dbReference type="NCBIfam" id="NF012155">
    <property type="entry name" value="tet_protect_M"/>
    <property type="match status" value="1"/>
</dbReference>
<dbReference type="NCBIfam" id="NF033148">
    <property type="entry name" value="tet_protect_M_W"/>
    <property type="match status" value="1"/>
</dbReference>
<dbReference type="PANTHER" id="PTHR43261:SF1">
    <property type="entry name" value="RIBOSOME-RELEASING FACTOR 2, MITOCHONDRIAL"/>
    <property type="match status" value="1"/>
</dbReference>
<dbReference type="PANTHER" id="PTHR43261">
    <property type="entry name" value="TRANSLATION ELONGATION FACTOR G-RELATED"/>
    <property type="match status" value="1"/>
</dbReference>
<dbReference type="Pfam" id="PF22042">
    <property type="entry name" value="EF-G_D2"/>
    <property type="match status" value="1"/>
</dbReference>
<dbReference type="Pfam" id="PF00679">
    <property type="entry name" value="EFG_C"/>
    <property type="match status" value="1"/>
</dbReference>
<dbReference type="Pfam" id="PF14492">
    <property type="entry name" value="EFG_III"/>
    <property type="match status" value="1"/>
</dbReference>
<dbReference type="Pfam" id="PF03764">
    <property type="entry name" value="EFG_IV"/>
    <property type="match status" value="1"/>
</dbReference>
<dbReference type="Pfam" id="PF00009">
    <property type="entry name" value="GTP_EFTU"/>
    <property type="match status" value="1"/>
</dbReference>
<dbReference type="PRINTS" id="PR00315">
    <property type="entry name" value="ELONGATNFCT"/>
</dbReference>
<dbReference type="PRINTS" id="PR01037">
    <property type="entry name" value="TCRTETOQM"/>
</dbReference>
<dbReference type="SMART" id="SM00889">
    <property type="entry name" value="EFG_IV"/>
    <property type="match status" value="1"/>
</dbReference>
<dbReference type="SUPFAM" id="SSF54980">
    <property type="entry name" value="EF-G C-terminal domain-like"/>
    <property type="match status" value="2"/>
</dbReference>
<dbReference type="SUPFAM" id="SSF52540">
    <property type="entry name" value="P-loop containing nucleoside triphosphate hydrolases"/>
    <property type="match status" value="1"/>
</dbReference>
<dbReference type="SUPFAM" id="SSF54211">
    <property type="entry name" value="Ribosomal protein S5 domain 2-like"/>
    <property type="match status" value="1"/>
</dbReference>
<dbReference type="SUPFAM" id="SSF50447">
    <property type="entry name" value="Translation proteins"/>
    <property type="match status" value="1"/>
</dbReference>
<dbReference type="PROSITE" id="PS00301">
    <property type="entry name" value="G_TR_1"/>
    <property type="match status" value="1"/>
</dbReference>
<dbReference type="PROSITE" id="PS51722">
    <property type="entry name" value="G_TR_2"/>
    <property type="match status" value="1"/>
</dbReference>
<protein>
    <recommendedName>
        <fullName>Tetracycline resistance protein TetM</fullName>
    </recommendedName>
</protein>